<accession>B0SXA8</accession>
<feature type="chain" id="PRO_1000077031" description="3-dehydroquinate dehydratase">
    <location>
        <begin position="1"/>
        <end position="147"/>
    </location>
</feature>
<feature type="active site" description="Proton acceptor" evidence="1">
    <location>
        <position position="24"/>
    </location>
</feature>
<feature type="active site" description="Proton donor" evidence="1">
    <location>
        <position position="101"/>
    </location>
</feature>
<feature type="binding site" evidence="1">
    <location>
        <position position="75"/>
    </location>
    <ligand>
        <name>substrate</name>
    </ligand>
</feature>
<feature type="binding site" evidence="1">
    <location>
        <position position="81"/>
    </location>
    <ligand>
        <name>substrate</name>
    </ligand>
</feature>
<feature type="binding site" evidence="1">
    <location>
        <position position="88"/>
    </location>
    <ligand>
        <name>substrate</name>
    </ligand>
</feature>
<feature type="binding site" evidence="1">
    <location>
        <begin position="102"/>
        <end position="103"/>
    </location>
    <ligand>
        <name>substrate</name>
    </ligand>
</feature>
<feature type="binding site" evidence="1">
    <location>
        <position position="112"/>
    </location>
    <ligand>
        <name>substrate</name>
    </ligand>
</feature>
<feature type="site" description="Transition state stabilizer" evidence="1">
    <location>
        <position position="19"/>
    </location>
</feature>
<evidence type="ECO:0000255" key="1">
    <source>
        <dbReference type="HAMAP-Rule" id="MF_00169"/>
    </source>
</evidence>
<dbReference type="EC" id="4.2.1.10" evidence="1"/>
<dbReference type="EMBL" id="CP000927">
    <property type="protein sequence ID" value="ABZ71693.1"/>
    <property type="molecule type" value="Genomic_DNA"/>
</dbReference>
<dbReference type="SMR" id="B0SXA8"/>
<dbReference type="STRING" id="366602.Caul_2566"/>
<dbReference type="KEGG" id="cak:Caul_2566"/>
<dbReference type="eggNOG" id="COG0757">
    <property type="taxonomic scope" value="Bacteria"/>
</dbReference>
<dbReference type="HOGENOM" id="CLU_090968_2_0_5"/>
<dbReference type="OrthoDB" id="9790793at2"/>
<dbReference type="UniPathway" id="UPA00053">
    <property type="reaction ID" value="UER00086"/>
</dbReference>
<dbReference type="GO" id="GO:0003855">
    <property type="term" value="F:3-dehydroquinate dehydratase activity"/>
    <property type="evidence" value="ECO:0007669"/>
    <property type="project" value="UniProtKB-UniRule"/>
</dbReference>
<dbReference type="GO" id="GO:0008652">
    <property type="term" value="P:amino acid biosynthetic process"/>
    <property type="evidence" value="ECO:0007669"/>
    <property type="project" value="UniProtKB-KW"/>
</dbReference>
<dbReference type="GO" id="GO:0009073">
    <property type="term" value="P:aromatic amino acid family biosynthetic process"/>
    <property type="evidence" value="ECO:0007669"/>
    <property type="project" value="UniProtKB-KW"/>
</dbReference>
<dbReference type="GO" id="GO:0009423">
    <property type="term" value="P:chorismate biosynthetic process"/>
    <property type="evidence" value="ECO:0007669"/>
    <property type="project" value="UniProtKB-UniRule"/>
</dbReference>
<dbReference type="GO" id="GO:0019631">
    <property type="term" value="P:quinate catabolic process"/>
    <property type="evidence" value="ECO:0007669"/>
    <property type="project" value="TreeGrafter"/>
</dbReference>
<dbReference type="CDD" id="cd00466">
    <property type="entry name" value="DHQase_II"/>
    <property type="match status" value="1"/>
</dbReference>
<dbReference type="Gene3D" id="3.40.50.9100">
    <property type="entry name" value="Dehydroquinase, class II"/>
    <property type="match status" value="1"/>
</dbReference>
<dbReference type="HAMAP" id="MF_00169">
    <property type="entry name" value="AroQ"/>
    <property type="match status" value="1"/>
</dbReference>
<dbReference type="InterPro" id="IPR001874">
    <property type="entry name" value="DHquinase_II"/>
</dbReference>
<dbReference type="InterPro" id="IPR018509">
    <property type="entry name" value="DHquinase_II_CS"/>
</dbReference>
<dbReference type="InterPro" id="IPR036441">
    <property type="entry name" value="DHquinase_II_sf"/>
</dbReference>
<dbReference type="NCBIfam" id="NF003805">
    <property type="entry name" value="PRK05395.1-2"/>
    <property type="match status" value="1"/>
</dbReference>
<dbReference type="NCBIfam" id="NF003806">
    <property type="entry name" value="PRK05395.1-3"/>
    <property type="match status" value="1"/>
</dbReference>
<dbReference type="NCBIfam" id="NF003807">
    <property type="entry name" value="PRK05395.1-4"/>
    <property type="match status" value="1"/>
</dbReference>
<dbReference type="PANTHER" id="PTHR21272">
    <property type="entry name" value="CATABOLIC 3-DEHYDROQUINASE"/>
    <property type="match status" value="1"/>
</dbReference>
<dbReference type="PANTHER" id="PTHR21272:SF3">
    <property type="entry name" value="CATABOLIC 3-DEHYDROQUINASE"/>
    <property type="match status" value="1"/>
</dbReference>
<dbReference type="Pfam" id="PF01220">
    <property type="entry name" value="DHquinase_II"/>
    <property type="match status" value="1"/>
</dbReference>
<dbReference type="PIRSF" id="PIRSF001399">
    <property type="entry name" value="DHquinase_II"/>
    <property type="match status" value="1"/>
</dbReference>
<dbReference type="SUPFAM" id="SSF52304">
    <property type="entry name" value="Type II 3-dehydroquinate dehydratase"/>
    <property type="match status" value="1"/>
</dbReference>
<dbReference type="PROSITE" id="PS01029">
    <property type="entry name" value="DEHYDROQUINASE_II"/>
    <property type="match status" value="1"/>
</dbReference>
<sequence length="147" mass="15661">MVKPIHVLSGPNLNLLGTREPEIYGKDTLDDVRARCKARAAVRGLSVVFRQSNHEGALIDWVQEARTEACALVINPAGYGHTSIALLDALKTLNIPVIECHLSNPAAREDFRRHTYVSLAATGIVSGFGAASYELAIEAAAGLVGAN</sequence>
<keyword id="KW-0028">Amino-acid biosynthesis</keyword>
<keyword id="KW-0057">Aromatic amino acid biosynthesis</keyword>
<keyword id="KW-0456">Lyase</keyword>
<name>AROQ_CAUSK</name>
<protein>
    <recommendedName>
        <fullName evidence="1">3-dehydroquinate dehydratase</fullName>
        <shortName evidence="1">3-dehydroquinase</shortName>
        <ecNumber evidence="1">4.2.1.10</ecNumber>
    </recommendedName>
    <alternativeName>
        <fullName evidence="1">Type II DHQase</fullName>
    </alternativeName>
</protein>
<organism>
    <name type="scientific">Caulobacter sp. (strain K31)</name>
    <dbReference type="NCBI Taxonomy" id="366602"/>
    <lineage>
        <taxon>Bacteria</taxon>
        <taxon>Pseudomonadati</taxon>
        <taxon>Pseudomonadota</taxon>
        <taxon>Alphaproteobacteria</taxon>
        <taxon>Caulobacterales</taxon>
        <taxon>Caulobacteraceae</taxon>
        <taxon>Caulobacter</taxon>
    </lineage>
</organism>
<comment type="function">
    <text evidence="1">Catalyzes a trans-dehydration via an enolate intermediate.</text>
</comment>
<comment type="catalytic activity">
    <reaction evidence="1">
        <text>3-dehydroquinate = 3-dehydroshikimate + H2O</text>
        <dbReference type="Rhea" id="RHEA:21096"/>
        <dbReference type="ChEBI" id="CHEBI:15377"/>
        <dbReference type="ChEBI" id="CHEBI:16630"/>
        <dbReference type="ChEBI" id="CHEBI:32364"/>
        <dbReference type="EC" id="4.2.1.10"/>
    </reaction>
</comment>
<comment type="pathway">
    <text evidence="1">Metabolic intermediate biosynthesis; chorismate biosynthesis; chorismate from D-erythrose 4-phosphate and phosphoenolpyruvate: step 3/7.</text>
</comment>
<comment type="subunit">
    <text evidence="1">Homododecamer.</text>
</comment>
<comment type="similarity">
    <text evidence="1">Belongs to the type-II 3-dehydroquinase family.</text>
</comment>
<proteinExistence type="inferred from homology"/>
<gene>
    <name evidence="1" type="primary">aroQ</name>
    <name type="ordered locus">Caul_2566</name>
</gene>
<reference key="1">
    <citation type="submission" date="2008-01" db="EMBL/GenBank/DDBJ databases">
        <title>Complete sequence of chromosome of Caulobacter sp. K31.</title>
        <authorList>
            <consortium name="US DOE Joint Genome Institute"/>
            <person name="Copeland A."/>
            <person name="Lucas S."/>
            <person name="Lapidus A."/>
            <person name="Barry K."/>
            <person name="Glavina del Rio T."/>
            <person name="Dalin E."/>
            <person name="Tice H."/>
            <person name="Pitluck S."/>
            <person name="Bruce D."/>
            <person name="Goodwin L."/>
            <person name="Thompson L.S."/>
            <person name="Brettin T."/>
            <person name="Detter J.C."/>
            <person name="Han C."/>
            <person name="Schmutz J."/>
            <person name="Larimer F."/>
            <person name="Land M."/>
            <person name="Hauser L."/>
            <person name="Kyrpides N."/>
            <person name="Kim E."/>
            <person name="Stephens C."/>
            <person name="Richardson P."/>
        </authorList>
    </citation>
    <scope>NUCLEOTIDE SEQUENCE [LARGE SCALE GENOMIC DNA]</scope>
    <source>
        <strain>K31</strain>
    </source>
</reference>